<evidence type="ECO:0000255" key="1">
    <source>
        <dbReference type="HAMAP-Rule" id="MF_00073"/>
    </source>
</evidence>
<accession>Q5F9Y0</accession>
<keyword id="KW-1185">Reference proteome</keyword>
<keyword id="KW-0694">RNA-binding</keyword>
<keyword id="KW-0804">Transcription</keyword>
<keyword id="KW-0889">Transcription antitermination</keyword>
<keyword id="KW-0805">Transcription regulation</keyword>
<sequence length="141" mass="15997">MKTARRRSRELAVQAVYQSLINRTAAPEIAKNIREMSDFAKADEELFNKLFFGTQTNAADYIQKIRPLLDRDEKDLNPIERAVLLTACHELSAMPETPYPVIINEAIEVTKTFGGTDGHKFVNGILDKLAAQIRPDEPKRR</sequence>
<proteinExistence type="inferred from homology"/>
<comment type="function">
    <text evidence="1">Involved in transcription antitermination. Required for transcription of ribosomal RNA (rRNA) genes. Binds specifically to the boxA antiterminator sequence of the ribosomal RNA (rrn) operons.</text>
</comment>
<comment type="similarity">
    <text evidence="1">Belongs to the NusB family.</text>
</comment>
<dbReference type="EMBL" id="AE004969">
    <property type="protein sequence ID" value="AAW89007.1"/>
    <property type="molecule type" value="Genomic_DNA"/>
</dbReference>
<dbReference type="RefSeq" id="WP_002241285.1">
    <property type="nucleotide sequence ID" value="NC_002946.2"/>
</dbReference>
<dbReference type="RefSeq" id="YP_207419.1">
    <property type="nucleotide sequence ID" value="NC_002946.2"/>
</dbReference>
<dbReference type="SMR" id="Q5F9Y0"/>
<dbReference type="STRING" id="242231.NGO_0256"/>
<dbReference type="GeneID" id="66752591"/>
<dbReference type="KEGG" id="ngo:NGO_0256"/>
<dbReference type="PATRIC" id="fig|242231.10.peg.315"/>
<dbReference type="HOGENOM" id="CLU_087843_4_1_4"/>
<dbReference type="Proteomes" id="UP000000535">
    <property type="component" value="Chromosome"/>
</dbReference>
<dbReference type="GO" id="GO:0005829">
    <property type="term" value="C:cytosol"/>
    <property type="evidence" value="ECO:0007669"/>
    <property type="project" value="TreeGrafter"/>
</dbReference>
<dbReference type="GO" id="GO:0003723">
    <property type="term" value="F:RNA binding"/>
    <property type="evidence" value="ECO:0007669"/>
    <property type="project" value="UniProtKB-UniRule"/>
</dbReference>
<dbReference type="GO" id="GO:0006353">
    <property type="term" value="P:DNA-templated transcription termination"/>
    <property type="evidence" value="ECO:0007669"/>
    <property type="project" value="UniProtKB-UniRule"/>
</dbReference>
<dbReference type="GO" id="GO:0031564">
    <property type="term" value="P:transcription antitermination"/>
    <property type="evidence" value="ECO:0007669"/>
    <property type="project" value="UniProtKB-KW"/>
</dbReference>
<dbReference type="FunFam" id="1.10.940.10:FF:000010">
    <property type="entry name" value="Transcription antitermination protein NusB"/>
    <property type="match status" value="1"/>
</dbReference>
<dbReference type="Gene3D" id="1.10.940.10">
    <property type="entry name" value="NusB-like"/>
    <property type="match status" value="1"/>
</dbReference>
<dbReference type="HAMAP" id="MF_00073">
    <property type="entry name" value="NusB"/>
    <property type="match status" value="1"/>
</dbReference>
<dbReference type="InterPro" id="IPR035926">
    <property type="entry name" value="NusB-like_sf"/>
</dbReference>
<dbReference type="InterPro" id="IPR011605">
    <property type="entry name" value="NusB_fam"/>
</dbReference>
<dbReference type="InterPro" id="IPR006027">
    <property type="entry name" value="NusB_RsmB_TIM44"/>
</dbReference>
<dbReference type="NCBIfam" id="TIGR01951">
    <property type="entry name" value="nusB"/>
    <property type="match status" value="1"/>
</dbReference>
<dbReference type="PANTHER" id="PTHR11078:SF3">
    <property type="entry name" value="ANTITERMINATION NUSB DOMAIN-CONTAINING PROTEIN"/>
    <property type="match status" value="1"/>
</dbReference>
<dbReference type="PANTHER" id="PTHR11078">
    <property type="entry name" value="N UTILIZATION SUBSTANCE PROTEIN B-RELATED"/>
    <property type="match status" value="1"/>
</dbReference>
<dbReference type="Pfam" id="PF01029">
    <property type="entry name" value="NusB"/>
    <property type="match status" value="1"/>
</dbReference>
<dbReference type="SUPFAM" id="SSF48013">
    <property type="entry name" value="NusB-like"/>
    <property type="match status" value="1"/>
</dbReference>
<name>NUSB_NEIG1</name>
<protein>
    <recommendedName>
        <fullName evidence="1">Transcription antitermination protein NusB</fullName>
    </recommendedName>
    <alternativeName>
        <fullName evidence="1">Antitermination factor NusB</fullName>
    </alternativeName>
</protein>
<reference key="1">
    <citation type="submission" date="2003-03" db="EMBL/GenBank/DDBJ databases">
        <title>The complete genome sequence of Neisseria gonorrhoeae.</title>
        <authorList>
            <person name="Lewis L.A."/>
            <person name="Gillaspy A.F."/>
            <person name="McLaughlin R.E."/>
            <person name="Gipson M."/>
            <person name="Ducey T.F."/>
            <person name="Ownbey T."/>
            <person name="Hartman K."/>
            <person name="Nydick C."/>
            <person name="Carson M.B."/>
            <person name="Vaughn J."/>
            <person name="Thomson C."/>
            <person name="Song L."/>
            <person name="Lin S."/>
            <person name="Yuan X."/>
            <person name="Najar F."/>
            <person name="Zhan M."/>
            <person name="Ren Q."/>
            <person name="Zhu H."/>
            <person name="Qi S."/>
            <person name="Kenton S.M."/>
            <person name="Lai H."/>
            <person name="White J.D."/>
            <person name="Clifton S."/>
            <person name="Roe B.A."/>
            <person name="Dyer D.W."/>
        </authorList>
    </citation>
    <scope>NUCLEOTIDE SEQUENCE [LARGE SCALE GENOMIC DNA]</scope>
    <source>
        <strain>ATCC 700825 / FA 1090</strain>
    </source>
</reference>
<feature type="chain" id="PRO_0000265549" description="Transcription antitermination protein NusB">
    <location>
        <begin position="1"/>
        <end position="141"/>
    </location>
</feature>
<gene>
    <name evidence="1" type="primary">nusB</name>
    <name type="ordered locus">NGO_0256</name>
</gene>
<organism>
    <name type="scientific">Neisseria gonorrhoeae (strain ATCC 700825 / FA 1090)</name>
    <dbReference type="NCBI Taxonomy" id="242231"/>
    <lineage>
        <taxon>Bacteria</taxon>
        <taxon>Pseudomonadati</taxon>
        <taxon>Pseudomonadota</taxon>
        <taxon>Betaproteobacteria</taxon>
        <taxon>Neisseriales</taxon>
        <taxon>Neisseriaceae</taxon>
        <taxon>Neisseria</taxon>
    </lineage>
</organism>